<sequence>MNSFSTSAFGPVAFSLGLLLVLPAAFPAPVLPGEDSKDVAAPHSQPLTSSERIDKHIRYILDGISALRKETCNRSNMCDSTKEALAENNLNLPKMAEKDGCFQSGFNEDTCLVKIITGLLEFEVYLEYLQNRFESSEEQARAVQMSTKVLIQLLQKKAKNLDAITTPEPTTNASLLTKLQAQNQWLQDMTTHLILRSFKEFLQSSLRALRQM</sequence>
<accession>P46650</accession>
<proteinExistence type="evidence at transcript level"/>
<evidence type="ECO:0000250" key="1"/>
<evidence type="ECO:0000250" key="2">
    <source>
        <dbReference type="UniProtKB" id="P05231"/>
    </source>
</evidence>
<evidence type="ECO:0000250" key="3">
    <source>
        <dbReference type="UniProtKB" id="P08505"/>
    </source>
</evidence>
<evidence type="ECO:0000255" key="4"/>
<evidence type="ECO:0000305" key="5"/>
<gene>
    <name type="primary">IL6</name>
</gene>
<reference key="1">
    <citation type="journal article" date="1995" name="J. Immunol.">
        <title>Comparative sequence analysis of cytokine genes from human and nonhuman primates.</title>
        <authorList>
            <person name="Villinger F.J."/>
            <person name="Brar S.S."/>
            <person name="Mayne A.E."/>
            <person name="Chikkala N."/>
            <person name="Ansari A.A."/>
        </authorList>
    </citation>
    <scope>NUCLEOTIDE SEQUENCE [MRNA]</scope>
    <source>
        <strain>FUj</strain>
    </source>
</reference>
<dbReference type="EMBL" id="L26032">
    <property type="protein sequence ID" value="AAA99972.1"/>
    <property type="molecule type" value="mRNA"/>
</dbReference>
<dbReference type="SMR" id="P46650"/>
<dbReference type="STRING" id="9531.ENSCATP00000037012"/>
<dbReference type="GlyCosmos" id="P46650">
    <property type="glycosylation" value="2 sites, No reported glycans"/>
</dbReference>
<dbReference type="Proteomes" id="UP000233060">
    <property type="component" value="Unassembled WGS sequence"/>
</dbReference>
<dbReference type="GO" id="GO:0005615">
    <property type="term" value="C:extracellular space"/>
    <property type="evidence" value="ECO:0007669"/>
    <property type="project" value="UniProtKB-KW"/>
</dbReference>
<dbReference type="GO" id="GO:0005896">
    <property type="term" value="C:interleukin-6 receptor complex"/>
    <property type="evidence" value="ECO:0007669"/>
    <property type="project" value="TreeGrafter"/>
</dbReference>
<dbReference type="GO" id="GO:0005125">
    <property type="term" value="F:cytokine activity"/>
    <property type="evidence" value="ECO:0007669"/>
    <property type="project" value="UniProtKB-KW"/>
</dbReference>
<dbReference type="GO" id="GO:0008083">
    <property type="term" value="F:growth factor activity"/>
    <property type="evidence" value="ECO:0007669"/>
    <property type="project" value="UniProtKB-KW"/>
</dbReference>
<dbReference type="GO" id="GO:0005138">
    <property type="term" value="F:interleukin-6 receptor binding"/>
    <property type="evidence" value="ECO:0007669"/>
    <property type="project" value="InterPro"/>
</dbReference>
<dbReference type="GO" id="GO:0006953">
    <property type="term" value="P:acute-phase response"/>
    <property type="evidence" value="ECO:0007669"/>
    <property type="project" value="UniProtKB-KW"/>
</dbReference>
<dbReference type="GO" id="GO:0042593">
    <property type="term" value="P:glucose homeostasis"/>
    <property type="evidence" value="ECO:0000250"/>
    <property type="project" value="UniProtKB"/>
</dbReference>
<dbReference type="GO" id="GO:0072574">
    <property type="term" value="P:hepatocyte proliferation"/>
    <property type="evidence" value="ECO:0000250"/>
    <property type="project" value="UniProtKB"/>
</dbReference>
<dbReference type="GO" id="GO:0070102">
    <property type="term" value="P:interleukin-6-mediated signaling pathway"/>
    <property type="evidence" value="ECO:0000250"/>
    <property type="project" value="UniProtKB"/>
</dbReference>
<dbReference type="GO" id="GO:0097421">
    <property type="term" value="P:liver regeneration"/>
    <property type="evidence" value="ECO:0000250"/>
    <property type="project" value="UniProtKB"/>
</dbReference>
<dbReference type="GO" id="GO:0051240">
    <property type="term" value="P:positive regulation of multicellular organismal process"/>
    <property type="evidence" value="ECO:0007669"/>
    <property type="project" value="UniProtKB-ARBA"/>
</dbReference>
<dbReference type="GO" id="GO:0046427">
    <property type="term" value="P:positive regulation of receptor signaling pathway via JAK-STAT"/>
    <property type="evidence" value="ECO:0007669"/>
    <property type="project" value="TreeGrafter"/>
</dbReference>
<dbReference type="GO" id="GO:1904894">
    <property type="term" value="P:positive regulation of receptor signaling pathway via STAT"/>
    <property type="evidence" value="ECO:0000250"/>
    <property type="project" value="UniProtKB"/>
</dbReference>
<dbReference type="GO" id="GO:0070092">
    <property type="term" value="P:regulation of glucagon secretion"/>
    <property type="evidence" value="ECO:0000250"/>
    <property type="project" value="UniProtKB"/>
</dbReference>
<dbReference type="GO" id="GO:0050796">
    <property type="term" value="P:regulation of insulin secretion"/>
    <property type="evidence" value="ECO:0000250"/>
    <property type="project" value="UniProtKB"/>
</dbReference>
<dbReference type="GO" id="GO:0014823">
    <property type="term" value="P:response to activity"/>
    <property type="evidence" value="ECO:0000250"/>
    <property type="project" value="UniProtKB"/>
</dbReference>
<dbReference type="GO" id="GO:0072540">
    <property type="term" value="P:T-helper 17 cell lineage commitment"/>
    <property type="evidence" value="ECO:0000250"/>
    <property type="project" value="UniProtKB"/>
</dbReference>
<dbReference type="GO" id="GO:0010573">
    <property type="term" value="P:vascular endothelial growth factor production"/>
    <property type="evidence" value="ECO:0000250"/>
    <property type="project" value="UniProtKB"/>
</dbReference>
<dbReference type="FunFam" id="1.20.1250.10:FF:000006">
    <property type="entry name" value="Interleukin-6"/>
    <property type="match status" value="1"/>
</dbReference>
<dbReference type="Gene3D" id="1.20.1250.10">
    <property type="match status" value="1"/>
</dbReference>
<dbReference type="InterPro" id="IPR009079">
    <property type="entry name" value="4_helix_cytokine-like_core"/>
</dbReference>
<dbReference type="InterPro" id="IPR003574">
    <property type="entry name" value="IL-6-like"/>
</dbReference>
<dbReference type="InterPro" id="IPR030474">
    <property type="entry name" value="IL-6/GCSF/MGF"/>
</dbReference>
<dbReference type="InterPro" id="IPR030473">
    <property type="entry name" value="IL6/GCSF/MGF_CS"/>
</dbReference>
<dbReference type="PANTHER" id="PTHR48494">
    <property type="entry name" value="INTERLEUKIN-6"/>
    <property type="match status" value="1"/>
</dbReference>
<dbReference type="PANTHER" id="PTHR48494:SF1">
    <property type="entry name" value="INTERLEUKIN-6"/>
    <property type="match status" value="1"/>
</dbReference>
<dbReference type="Pfam" id="PF00489">
    <property type="entry name" value="IL6"/>
    <property type="match status" value="1"/>
</dbReference>
<dbReference type="PIRSF" id="PIRSF001935">
    <property type="entry name" value="IL6_MGF_GCSF"/>
    <property type="match status" value="1"/>
</dbReference>
<dbReference type="PRINTS" id="PR00433">
    <property type="entry name" value="IL6GCSFMGF"/>
</dbReference>
<dbReference type="PRINTS" id="PR00434">
    <property type="entry name" value="INTERLEUKIN6"/>
</dbReference>
<dbReference type="SMART" id="SM00126">
    <property type="entry name" value="IL6"/>
    <property type="match status" value="1"/>
</dbReference>
<dbReference type="SUPFAM" id="SSF47266">
    <property type="entry name" value="4-helical cytokines"/>
    <property type="match status" value="1"/>
</dbReference>
<dbReference type="PROSITE" id="PS00254">
    <property type="entry name" value="INTERLEUKIN_6"/>
    <property type="match status" value="1"/>
</dbReference>
<comment type="function">
    <text evidence="2">Cytokine with a wide variety of biological functions in immunity, tissue regeneration, and metabolism. Binds to IL6R, then the complex associates to the signaling subunit IL6ST/gp130 to trigger the intracellular IL6-signaling pathway. The interaction with the membrane-bound IL6R and IL6ST stimulates 'classic signaling', whereas the binding of IL6 and soluble IL6R to IL6ST stimulates 'trans-signaling'. Alternatively, 'cluster signaling' occurs when membrane-bound IL6:IL6R complexes on transmitter cells activate IL6ST receptors on neighboring receiver cells.</text>
</comment>
<comment type="function">
    <text evidence="2 3">IL6 is a potent inducer of the acute phase response. Rapid production of IL6 contributes to host defense during infection and tissue injury, but excessive IL6 synthesis is involved in disease pathology. In the innate immune response, is synthesized by myeloid cells, such as macrophages and dendritic cells, upon recognition of pathogens through toll-like receptors (TLRs) at the site of infection or tissue injury (By similarity). In the adaptive immune response, is required for the differentiation of B cells into immunoglobulin-secreting cells. Plays a major role in the differentiation of CD4(+) T cell subsets. Essential factor for the development of T follicular helper (Tfh) cells that are required for the induction of germinal-center formation. Required to drive naive CD4(+) T cells to the Th17 lineage. Also required for proliferation of myeloma cells and the survival of plasmablast cells (By similarity).</text>
</comment>
<comment type="function">
    <text evidence="2 3">Acts as an essential factor in bone homeostasis and on vessels directly or indirectly by induction of VEGF, resulting in increased angiogenesis activity and vascular permeability. Induces, through 'trans-signaling' and synergistically with IL1B and TNF, the production of VEGF. Involved in metabolic controls, is discharged into the bloodstream after muscle contraction increasing lipolysis and improving insulin resistance (By similarity). 'Trans-signaling' in central nervous system also regulates energy and glucose homeostasis. Mediates, through GLP-1, crosstalk between insulin-sensitive tissues, intestinal L cells and pancreatic islets to adapt to changes in insulin demand (By similarity). Also acts as a myokine (By similarity). Plays a protective role during liver injury, being required for maintenance of tissue regeneration (By similarity). Also has a pivotal role in iron metabolism by regulating HAMP/hepcidin expression upon inflammation or bacterial infection (By similarity). Through activation of IL6ST-YAP-NOTCH pathway, induces inflammation-induced epithelial regeneration (By similarity).</text>
</comment>
<comment type="subunit">
    <text evidence="2">Component of a hexamer of two molecules each of IL6, IL6R and IL6ST; first binds to IL6R to associate with the signaling subunit IL6ST. Interacts with IL6R (via the N-terminal ectodomain); this interaction may be affected by IL6R-binding with SORL1, hence decreasing IL6 cis signaling. Interacts with SORL1 (via the N-terminal ectodomain); this interaction leads to IL6 internalization and lysosomal degradation. May form a trimeric complex with the soluble SORL1 ectodomain and soluble IL6R receptor; this interaction might stabilize circulating IL6, hence promoting IL6 trans signaling.</text>
</comment>
<comment type="subcellular location">
    <subcellularLocation>
        <location evidence="2">Secreted</location>
    </subcellularLocation>
</comment>
<comment type="similarity">
    <text evidence="5">Belongs to the IL-6 superfamily.</text>
</comment>
<protein>
    <recommendedName>
        <fullName>Interleukin-6</fullName>
        <shortName>IL-6</shortName>
    </recommendedName>
</protein>
<feature type="signal peptide" evidence="1">
    <location>
        <begin position="1"/>
        <end position="29"/>
    </location>
</feature>
<feature type="chain" id="PRO_0000015578" description="Interleukin-6">
    <location>
        <begin position="30"/>
        <end position="212"/>
    </location>
</feature>
<feature type="glycosylation site" description="N-linked (GlcNAc...) asparagine" evidence="4">
    <location>
        <position position="73"/>
    </location>
</feature>
<feature type="glycosylation site" description="N-linked (GlcNAc...) asparagine" evidence="4">
    <location>
        <position position="172"/>
    </location>
</feature>
<feature type="disulfide bond" evidence="1">
    <location>
        <begin position="72"/>
        <end position="78"/>
    </location>
</feature>
<feature type="disulfide bond" evidence="1">
    <location>
        <begin position="101"/>
        <end position="111"/>
    </location>
</feature>
<name>IL6_CERAT</name>
<keyword id="KW-0011">Acute phase</keyword>
<keyword id="KW-0202">Cytokine</keyword>
<keyword id="KW-1015">Disulfide bond</keyword>
<keyword id="KW-0325">Glycoprotein</keyword>
<keyword id="KW-0339">Growth factor</keyword>
<keyword id="KW-1185">Reference proteome</keyword>
<keyword id="KW-0964">Secreted</keyword>
<keyword id="KW-0732">Signal</keyword>
<organism>
    <name type="scientific">Cercocebus atys</name>
    <name type="common">Sooty mangabey</name>
    <name type="synonym">Cercocebus torquatus atys</name>
    <dbReference type="NCBI Taxonomy" id="9531"/>
    <lineage>
        <taxon>Eukaryota</taxon>
        <taxon>Metazoa</taxon>
        <taxon>Chordata</taxon>
        <taxon>Craniata</taxon>
        <taxon>Vertebrata</taxon>
        <taxon>Euteleostomi</taxon>
        <taxon>Mammalia</taxon>
        <taxon>Eutheria</taxon>
        <taxon>Euarchontoglires</taxon>
        <taxon>Primates</taxon>
        <taxon>Haplorrhini</taxon>
        <taxon>Catarrhini</taxon>
        <taxon>Cercopithecidae</taxon>
        <taxon>Cercopithecinae</taxon>
        <taxon>Cercocebus</taxon>
    </lineage>
</organism>